<gene>
    <name type="primary">PTTG3</name>
</gene>
<reference key="1">
    <citation type="journal article" date="2005" name="PLoS Biol.">
        <title>Emergence of young human genes after a burst of retroposition in primates.</title>
        <authorList>
            <person name="Marques A.C."/>
            <person name="Dupanloup I."/>
            <person name="Vinckenbosch N."/>
            <person name="Reymond A."/>
            <person name="Kaessmann H."/>
        </authorList>
    </citation>
    <scope>NUCLEOTIDE SEQUENCE [GENOMIC DNA]</scope>
</reference>
<name>PTTG3_PANTR</name>
<feature type="chain" id="PRO_0000333861" description="Putative pituitary tumor-transforming gene 3 protein">
    <location>
        <begin position="1"/>
        <end position="202"/>
    </location>
</feature>
<feature type="short sequence motif" description="D-box" evidence="1">
    <location>
        <begin position="61"/>
        <end position="64"/>
    </location>
</feature>
<feature type="short sequence motif" description="SH3-binding" evidence="1">
    <location>
        <begin position="163"/>
        <end position="173"/>
    </location>
</feature>
<accession>Q2QD15</accession>
<protein>
    <recommendedName>
        <fullName>Putative pituitary tumor-transforming gene 3 protein</fullName>
    </recommendedName>
    <alternativeName>
        <fullName>Securin-3</fullName>
    </alternativeName>
    <alternativeName>
        <fullName>rcPTTG1</fullName>
    </alternativeName>
</protein>
<organism>
    <name type="scientific">Pan troglodytes</name>
    <name type="common">Chimpanzee</name>
    <dbReference type="NCBI Taxonomy" id="9598"/>
    <lineage>
        <taxon>Eukaryota</taxon>
        <taxon>Metazoa</taxon>
        <taxon>Chordata</taxon>
        <taxon>Craniata</taxon>
        <taxon>Vertebrata</taxon>
        <taxon>Euteleostomi</taxon>
        <taxon>Mammalia</taxon>
        <taxon>Eutheria</taxon>
        <taxon>Euarchontoglires</taxon>
        <taxon>Primates</taxon>
        <taxon>Haplorrhini</taxon>
        <taxon>Catarrhini</taxon>
        <taxon>Hominidae</taxon>
        <taxon>Pan</taxon>
    </lineage>
</organism>
<sequence length="202" mass="21967">MATLIYVDKENEEPGTLVATTDGLKLGSGPSIKALDGRSQVSISCFGKTFDAPTSLPKATRKALGTVNRATEKSVKTNGPLKQKQPSFSAKKMTEKTVKAKNSVPASDDAYPEIEKLFPFNPLGFESFDLPEEHQIAHLPLSGVPLMILDEERELEKLFQLGPPSPLKMPSPPWKSNLLQSPLSILLTLDVELPPVCSDIDI</sequence>
<dbReference type="EMBL" id="DQ120701">
    <property type="protein sequence ID" value="ABC40664.1"/>
    <property type="molecule type" value="Genomic_DNA"/>
</dbReference>
<dbReference type="FunCoup" id="Q2QD15">
    <property type="interactions" value="85"/>
</dbReference>
<dbReference type="STRING" id="9598.ENSPTRP00000088706"/>
<dbReference type="Ensembl" id="ENSPTRT00000078226.1">
    <property type="protein sequence ID" value="ENSPTRP00000088706.1"/>
    <property type="gene ID" value="ENSPTRG00000052460.1"/>
</dbReference>
<dbReference type="GeneTree" id="ENSGT00390000009693"/>
<dbReference type="InParanoid" id="Q2QD15"/>
<dbReference type="OMA" id="EPGIHMA"/>
<dbReference type="Proteomes" id="UP000002277">
    <property type="component" value="Chromosome 8"/>
</dbReference>
<dbReference type="GO" id="GO:0005737">
    <property type="term" value="C:cytoplasm"/>
    <property type="evidence" value="ECO:0007669"/>
    <property type="project" value="UniProtKB-SubCell"/>
</dbReference>
<dbReference type="GO" id="GO:0005634">
    <property type="term" value="C:nucleus"/>
    <property type="evidence" value="ECO:0000318"/>
    <property type="project" value="GO_Central"/>
</dbReference>
<dbReference type="GO" id="GO:0017124">
    <property type="term" value="F:SH3 domain binding"/>
    <property type="evidence" value="ECO:0007669"/>
    <property type="project" value="UniProtKB-KW"/>
</dbReference>
<dbReference type="GO" id="GO:0051276">
    <property type="term" value="P:chromosome organization"/>
    <property type="evidence" value="ECO:0007669"/>
    <property type="project" value="InterPro"/>
</dbReference>
<dbReference type="GO" id="GO:0045143">
    <property type="term" value="P:homologous chromosome segregation"/>
    <property type="evidence" value="ECO:0000318"/>
    <property type="project" value="GO_Central"/>
</dbReference>
<dbReference type="InterPro" id="IPR006940">
    <property type="entry name" value="Securin_separation_inhibitor"/>
</dbReference>
<dbReference type="PANTHER" id="PTHR10418:SF3">
    <property type="entry name" value="PITUITARY TUMOR-TRANSFORMING GENE 3 PROTEIN-RELATED"/>
    <property type="match status" value="1"/>
</dbReference>
<dbReference type="PANTHER" id="PTHR10418">
    <property type="entry name" value="SECURIN-3"/>
    <property type="match status" value="1"/>
</dbReference>
<dbReference type="Pfam" id="PF04856">
    <property type="entry name" value="Securin"/>
    <property type="match status" value="1"/>
</dbReference>
<proteinExistence type="inferred from homology"/>
<comment type="subcellular location">
    <subcellularLocation>
        <location evidence="1">Cytoplasm</location>
    </subcellularLocation>
    <subcellularLocation>
        <location evidence="1">Nucleus</location>
    </subcellularLocation>
</comment>
<comment type="domain">
    <text evidence="1">The N-terminal destruction box (D-box) acts as a recognition signal for degradation via the ubiquitin-proteasome pathway.</text>
</comment>
<comment type="similarity">
    <text evidence="2">Belongs to the securin family.</text>
</comment>
<keyword id="KW-0963">Cytoplasm</keyword>
<keyword id="KW-0539">Nucleus</keyword>
<keyword id="KW-0656">Proto-oncogene</keyword>
<keyword id="KW-1185">Reference proteome</keyword>
<keyword id="KW-0729">SH3-binding</keyword>
<evidence type="ECO:0000250" key="1"/>
<evidence type="ECO:0000305" key="2"/>